<name>ATPB_BACC2</name>
<feature type="chain" id="PRO_1000143474" description="ATP synthase subunit beta">
    <location>
        <begin position="1"/>
        <end position="468"/>
    </location>
</feature>
<feature type="binding site" evidence="1">
    <location>
        <begin position="155"/>
        <end position="162"/>
    </location>
    <ligand>
        <name>ATP</name>
        <dbReference type="ChEBI" id="CHEBI:30616"/>
    </ligand>
</feature>
<evidence type="ECO:0000255" key="1">
    <source>
        <dbReference type="HAMAP-Rule" id="MF_01347"/>
    </source>
</evidence>
<reference key="1">
    <citation type="submission" date="2008-10" db="EMBL/GenBank/DDBJ databases">
        <title>Genome sequence of Bacillus cereus G9842.</title>
        <authorList>
            <person name="Dodson R.J."/>
            <person name="Durkin A.S."/>
            <person name="Rosovitz M.J."/>
            <person name="Rasko D.A."/>
            <person name="Hoffmaster A."/>
            <person name="Ravel J."/>
            <person name="Sutton G."/>
        </authorList>
    </citation>
    <scope>NUCLEOTIDE SEQUENCE [LARGE SCALE GENOMIC DNA]</scope>
    <source>
        <strain>G9842</strain>
    </source>
</reference>
<gene>
    <name evidence="1" type="primary">atpD</name>
    <name type="ordered locus">BCG9842_B5524</name>
</gene>
<dbReference type="EC" id="7.1.2.2" evidence="1"/>
<dbReference type="EMBL" id="CP001186">
    <property type="protein sequence ID" value="ACK94390.1"/>
    <property type="molecule type" value="Genomic_DNA"/>
</dbReference>
<dbReference type="RefSeq" id="WP_001032597.1">
    <property type="nucleotide sequence ID" value="NC_011772.1"/>
</dbReference>
<dbReference type="SMR" id="B7IQV8"/>
<dbReference type="KEGG" id="bcg:BCG9842_B5524"/>
<dbReference type="HOGENOM" id="CLU_022398_0_2_9"/>
<dbReference type="Proteomes" id="UP000006744">
    <property type="component" value="Chromosome"/>
</dbReference>
<dbReference type="GO" id="GO:0005886">
    <property type="term" value="C:plasma membrane"/>
    <property type="evidence" value="ECO:0007669"/>
    <property type="project" value="UniProtKB-SubCell"/>
</dbReference>
<dbReference type="GO" id="GO:0045259">
    <property type="term" value="C:proton-transporting ATP synthase complex"/>
    <property type="evidence" value="ECO:0007669"/>
    <property type="project" value="UniProtKB-KW"/>
</dbReference>
<dbReference type="GO" id="GO:0005524">
    <property type="term" value="F:ATP binding"/>
    <property type="evidence" value="ECO:0007669"/>
    <property type="project" value="UniProtKB-UniRule"/>
</dbReference>
<dbReference type="GO" id="GO:0016887">
    <property type="term" value="F:ATP hydrolysis activity"/>
    <property type="evidence" value="ECO:0007669"/>
    <property type="project" value="InterPro"/>
</dbReference>
<dbReference type="GO" id="GO:0046933">
    <property type="term" value="F:proton-transporting ATP synthase activity, rotational mechanism"/>
    <property type="evidence" value="ECO:0007669"/>
    <property type="project" value="UniProtKB-UniRule"/>
</dbReference>
<dbReference type="CDD" id="cd18110">
    <property type="entry name" value="ATP-synt_F1_beta_C"/>
    <property type="match status" value="1"/>
</dbReference>
<dbReference type="CDD" id="cd18115">
    <property type="entry name" value="ATP-synt_F1_beta_N"/>
    <property type="match status" value="1"/>
</dbReference>
<dbReference type="CDD" id="cd01133">
    <property type="entry name" value="F1-ATPase_beta_CD"/>
    <property type="match status" value="1"/>
</dbReference>
<dbReference type="FunFam" id="1.10.1140.10:FF:000001">
    <property type="entry name" value="ATP synthase subunit beta"/>
    <property type="match status" value="1"/>
</dbReference>
<dbReference type="FunFam" id="2.40.10.170:FF:000005">
    <property type="entry name" value="ATP synthase subunit beta"/>
    <property type="match status" value="1"/>
</dbReference>
<dbReference type="FunFam" id="3.40.50.300:FF:000004">
    <property type="entry name" value="ATP synthase subunit beta"/>
    <property type="match status" value="1"/>
</dbReference>
<dbReference type="Gene3D" id="2.40.10.170">
    <property type="match status" value="1"/>
</dbReference>
<dbReference type="Gene3D" id="1.10.1140.10">
    <property type="entry name" value="Bovine Mitochondrial F1-atpase, Atp Synthase Beta Chain, Chain D, domain 3"/>
    <property type="match status" value="1"/>
</dbReference>
<dbReference type="Gene3D" id="3.40.50.300">
    <property type="entry name" value="P-loop containing nucleotide triphosphate hydrolases"/>
    <property type="match status" value="1"/>
</dbReference>
<dbReference type="HAMAP" id="MF_01347">
    <property type="entry name" value="ATP_synth_beta_bact"/>
    <property type="match status" value="1"/>
</dbReference>
<dbReference type="InterPro" id="IPR003593">
    <property type="entry name" value="AAA+_ATPase"/>
</dbReference>
<dbReference type="InterPro" id="IPR055190">
    <property type="entry name" value="ATP-synt_VA_C"/>
</dbReference>
<dbReference type="InterPro" id="IPR005722">
    <property type="entry name" value="ATP_synth_F1_bsu"/>
</dbReference>
<dbReference type="InterPro" id="IPR020003">
    <property type="entry name" value="ATPase_a/bsu_AS"/>
</dbReference>
<dbReference type="InterPro" id="IPR050053">
    <property type="entry name" value="ATPase_alpha/beta_chains"/>
</dbReference>
<dbReference type="InterPro" id="IPR004100">
    <property type="entry name" value="ATPase_F1/V1/A1_a/bsu_N"/>
</dbReference>
<dbReference type="InterPro" id="IPR036121">
    <property type="entry name" value="ATPase_F1/V1/A1_a/bsu_N_sf"/>
</dbReference>
<dbReference type="InterPro" id="IPR000194">
    <property type="entry name" value="ATPase_F1/V1/A1_a/bsu_nucl-bd"/>
</dbReference>
<dbReference type="InterPro" id="IPR024034">
    <property type="entry name" value="ATPase_F1/V1_b/a_C"/>
</dbReference>
<dbReference type="InterPro" id="IPR027417">
    <property type="entry name" value="P-loop_NTPase"/>
</dbReference>
<dbReference type="NCBIfam" id="TIGR01039">
    <property type="entry name" value="atpD"/>
    <property type="match status" value="1"/>
</dbReference>
<dbReference type="PANTHER" id="PTHR15184">
    <property type="entry name" value="ATP SYNTHASE"/>
    <property type="match status" value="1"/>
</dbReference>
<dbReference type="PANTHER" id="PTHR15184:SF71">
    <property type="entry name" value="ATP SYNTHASE SUBUNIT BETA, MITOCHONDRIAL"/>
    <property type="match status" value="1"/>
</dbReference>
<dbReference type="Pfam" id="PF00006">
    <property type="entry name" value="ATP-synt_ab"/>
    <property type="match status" value="1"/>
</dbReference>
<dbReference type="Pfam" id="PF02874">
    <property type="entry name" value="ATP-synt_ab_N"/>
    <property type="match status" value="1"/>
</dbReference>
<dbReference type="Pfam" id="PF22919">
    <property type="entry name" value="ATP-synt_VA_C"/>
    <property type="match status" value="1"/>
</dbReference>
<dbReference type="SMART" id="SM00382">
    <property type="entry name" value="AAA"/>
    <property type="match status" value="1"/>
</dbReference>
<dbReference type="SUPFAM" id="SSF47917">
    <property type="entry name" value="C-terminal domain of alpha and beta subunits of F1 ATP synthase"/>
    <property type="match status" value="1"/>
</dbReference>
<dbReference type="SUPFAM" id="SSF50615">
    <property type="entry name" value="N-terminal domain of alpha and beta subunits of F1 ATP synthase"/>
    <property type="match status" value="1"/>
</dbReference>
<dbReference type="SUPFAM" id="SSF52540">
    <property type="entry name" value="P-loop containing nucleoside triphosphate hydrolases"/>
    <property type="match status" value="1"/>
</dbReference>
<dbReference type="PROSITE" id="PS00152">
    <property type="entry name" value="ATPASE_ALPHA_BETA"/>
    <property type="match status" value="1"/>
</dbReference>
<sequence>MNKGRVTQIMGPVVDVKFDGGKLPEIYNALTVKQSNENGSMNLTFEVALHLGDDTVRTVAMSSTDGLVRGTEVEDTGKAISVPVGDVTLGRVFNVLGDAIDLDGELPADVHRDPIHRQAPAFEELSTKVEILETGIKVVDLLAPYIKGGKIGLFGGAGVGKTVLIQELINNIAQEHGGISVFAGVGERTREGNDLYHEMSDSGVIKKTAMVFGQMNEPPGARQRVALTGLTMAEHFRDEQGQDVLLFIDNIFRFTQAGSEVSALLGRMPSAVGYQPTLATEMGQLQERITSTNKGSITSIQAVYVPADDYTDPAPATTFAHLDATTNLERRLTQMGIYPAVDPLASTSRALSPEIVGEEHYEVARQVQQTLQRYKELQDIIAILGMDELSEEDKLVVHRARRIQFFLSQNFHVAEQFTGQKGSYVPVKNTVSGFKEILEGKYDDLPEDAFRLVGGIEEVIENAKKMMA</sequence>
<comment type="function">
    <text evidence="1">Produces ATP from ADP in the presence of a proton gradient across the membrane. The catalytic sites are hosted primarily by the beta subunits.</text>
</comment>
<comment type="catalytic activity">
    <reaction evidence="1">
        <text>ATP + H2O + 4 H(+)(in) = ADP + phosphate + 5 H(+)(out)</text>
        <dbReference type="Rhea" id="RHEA:57720"/>
        <dbReference type="ChEBI" id="CHEBI:15377"/>
        <dbReference type="ChEBI" id="CHEBI:15378"/>
        <dbReference type="ChEBI" id="CHEBI:30616"/>
        <dbReference type="ChEBI" id="CHEBI:43474"/>
        <dbReference type="ChEBI" id="CHEBI:456216"/>
        <dbReference type="EC" id="7.1.2.2"/>
    </reaction>
</comment>
<comment type="subunit">
    <text evidence="1">F-type ATPases have 2 components, CF(1) - the catalytic core - and CF(0) - the membrane proton channel. CF(1) has five subunits: alpha(3), beta(3), gamma(1), delta(1), epsilon(1). CF(0) has three main subunits: a(1), b(2) and c(9-12). The alpha and beta chains form an alternating ring which encloses part of the gamma chain. CF(1) is attached to CF(0) by a central stalk formed by the gamma and epsilon chains, while a peripheral stalk is formed by the delta and b chains.</text>
</comment>
<comment type="subcellular location">
    <subcellularLocation>
        <location evidence="1">Cell membrane</location>
        <topology evidence="1">Peripheral membrane protein</topology>
    </subcellularLocation>
</comment>
<comment type="similarity">
    <text evidence="1">Belongs to the ATPase alpha/beta chains family.</text>
</comment>
<keyword id="KW-0066">ATP synthesis</keyword>
<keyword id="KW-0067">ATP-binding</keyword>
<keyword id="KW-1003">Cell membrane</keyword>
<keyword id="KW-0139">CF(1)</keyword>
<keyword id="KW-0375">Hydrogen ion transport</keyword>
<keyword id="KW-0406">Ion transport</keyword>
<keyword id="KW-0472">Membrane</keyword>
<keyword id="KW-0547">Nucleotide-binding</keyword>
<keyword id="KW-1278">Translocase</keyword>
<keyword id="KW-0813">Transport</keyword>
<protein>
    <recommendedName>
        <fullName evidence="1">ATP synthase subunit beta</fullName>
        <ecNumber evidence="1">7.1.2.2</ecNumber>
    </recommendedName>
    <alternativeName>
        <fullName evidence="1">ATP synthase F1 sector subunit beta</fullName>
    </alternativeName>
    <alternativeName>
        <fullName evidence="1">F-ATPase subunit beta</fullName>
    </alternativeName>
</protein>
<accession>B7IQV8</accession>
<proteinExistence type="inferred from homology"/>
<organism>
    <name type="scientific">Bacillus cereus (strain G9842)</name>
    <dbReference type="NCBI Taxonomy" id="405531"/>
    <lineage>
        <taxon>Bacteria</taxon>
        <taxon>Bacillati</taxon>
        <taxon>Bacillota</taxon>
        <taxon>Bacilli</taxon>
        <taxon>Bacillales</taxon>
        <taxon>Bacillaceae</taxon>
        <taxon>Bacillus</taxon>
        <taxon>Bacillus cereus group</taxon>
    </lineage>
</organism>